<dbReference type="EC" id="7.1.1.-" evidence="1"/>
<dbReference type="EMBL" id="AL111168">
    <property type="protein sequence ID" value="CAL35669.1"/>
    <property type="molecule type" value="Genomic_DNA"/>
</dbReference>
<dbReference type="PIR" id="B81252">
    <property type="entry name" value="B81252"/>
</dbReference>
<dbReference type="RefSeq" id="WP_002851149.1">
    <property type="nucleotide sequence ID" value="NZ_SZUC01000002.1"/>
</dbReference>
<dbReference type="RefSeq" id="YP_002344941.1">
    <property type="nucleotide sequence ID" value="NC_002163.1"/>
</dbReference>
<dbReference type="SMR" id="Q9PMA3"/>
<dbReference type="STRING" id="192222.Cj1572c"/>
<dbReference type="TCDB" id="3.D.1.7.1">
    <property type="family name" value="the h+ or na+-translocating nadh dehydrogenase (ndh) family"/>
</dbReference>
<dbReference type="PaxDb" id="192222-Cj1572c"/>
<dbReference type="EnsemblBacteria" id="CAL35669">
    <property type="protein sequence ID" value="CAL35669"/>
    <property type="gene ID" value="Cj1572c"/>
</dbReference>
<dbReference type="GeneID" id="905843"/>
<dbReference type="KEGG" id="cje:Cj1572c"/>
<dbReference type="PATRIC" id="fig|192222.6.peg.1548"/>
<dbReference type="eggNOG" id="COG1005">
    <property type="taxonomic scope" value="Bacteria"/>
</dbReference>
<dbReference type="HOGENOM" id="CLU_015134_0_1_7"/>
<dbReference type="OrthoDB" id="9803734at2"/>
<dbReference type="Proteomes" id="UP000000799">
    <property type="component" value="Chromosome"/>
</dbReference>
<dbReference type="GO" id="GO:0005886">
    <property type="term" value="C:plasma membrane"/>
    <property type="evidence" value="ECO:0007669"/>
    <property type="project" value="UniProtKB-SubCell"/>
</dbReference>
<dbReference type="GO" id="GO:0003954">
    <property type="term" value="F:NADH dehydrogenase activity"/>
    <property type="evidence" value="ECO:0007669"/>
    <property type="project" value="TreeGrafter"/>
</dbReference>
<dbReference type="GO" id="GO:0016655">
    <property type="term" value="F:oxidoreductase activity, acting on NAD(P)H, quinone or similar compound as acceptor"/>
    <property type="evidence" value="ECO:0007669"/>
    <property type="project" value="UniProtKB-UniRule"/>
</dbReference>
<dbReference type="GO" id="GO:0048038">
    <property type="term" value="F:quinone binding"/>
    <property type="evidence" value="ECO:0007669"/>
    <property type="project" value="UniProtKB-KW"/>
</dbReference>
<dbReference type="GO" id="GO:0009060">
    <property type="term" value="P:aerobic respiration"/>
    <property type="evidence" value="ECO:0007669"/>
    <property type="project" value="TreeGrafter"/>
</dbReference>
<dbReference type="HAMAP" id="MF_01350">
    <property type="entry name" value="NDH1_NuoH"/>
    <property type="match status" value="1"/>
</dbReference>
<dbReference type="InterPro" id="IPR001694">
    <property type="entry name" value="NADH_UbQ_OxRdtase_su1/FPO"/>
</dbReference>
<dbReference type="InterPro" id="IPR018086">
    <property type="entry name" value="NADH_UbQ_OxRdtase_su1_CS"/>
</dbReference>
<dbReference type="NCBIfam" id="NF004741">
    <property type="entry name" value="PRK06076.1-2"/>
    <property type="match status" value="1"/>
</dbReference>
<dbReference type="PANTHER" id="PTHR11432">
    <property type="entry name" value="NADH DEHYDROGENASE SUBUNIT 1"/>
    <property type="match status" value="1"/>
</dbReference>
<dbReference type="PANTHER" id="PTHR11432:SF3">
    <property type="entry name" value="NADH-UBIQUINONE OXIDOREDUCTASE CHAIN 1"/>
    <property type="match status" value="1"/>
</dbReference>
<dbReference type="Pfam" id="PF00146">
    <property type="entry name" value="NADHdh"/>
    <property type="match status" value="1"/>
</dbReference>
<dbReference type="PROSITE" id="PS00667">
    <property type="entry name" value="COMPLEX1_ND1_1"/>
    <property type="match status" value="1"/>
</dbReference>
<gene>
    <name evidence="1" type="primary">nuoH</name>
    <name type="ordered locus">Cj1572c</name>
</gene>
<name>NUOH_CAMJE</name>
<accession>Q9PMA3</accession>
<accession>Q0P856</accession>
<feature type="chain" id="PRO_0000240061" description="NADH-quinone oxidoreductase subunit H">
    <location>
        <begin position="1"/>
        <end position="332"/>
    </location>
</feature>
<feature type="transmembrane region" description="Helical" evidence="1">
    <location>
        <begin position="4"/>
        <end position="24"/>
    </location>
</feature>
<feature type="transmembrane region" description="Helical" evidence="1">
    <location>
        <begin position="44"/>
        <end position="64"/>
    </location>
</feature>
<feature type="transmembrane region" description="Helical" evidence="1">
    <location>
        <begin position="78"/>
        <end position="98"/>
    </location>
</feature>
<feature type="transmembrane region" description="Helical" evidence="1">
    <location>
        <begin position="120"/>
        <end position="140"/>
    </location>
</feature>
<feature type="transmembrane region" description="Helical" evidence="1">
    <location>
        <begin position="165"/>
        <end position="185"/>
    </location>
</feature>
<feature type="transmembrane region" description="Helical" evidence="1">
    <location>
        <begin position="194"/>
        <end position="214"/>
    </location>
</feature>
<feature type="transmembrane region" description="Helical" evidence="1">
    <location>
        <begin position="255"/>
        <end position="275"/>
    </location>
</feature>
<feature type="transmembrane region" description="Helical" evidence="1">
    <location>
        <begin position="279"/>
        <end position="299"/>
    </location>
</feature>
<feature type="transmembrane region" description="Helical" evidence="1">
    <location>
        <begin position="312"/>
        <end position="332"/>
    </location>
</feature>
<protein>
    <recommendedName>
        <fullName evidence="1">NADH-quinone oxidoreductase subunit H</fullName>
        <ecNumber evidence="1">7.1.1.-</ecNumber>
    </recommendedName>
    <alternativeName>
        <fullName evidence="1">NADH dehydrogenase I subunit H</fullName>
    </alternativeName>
    <alternativeName>
        <fullName evidence="1">NDH-1 subunit H</fullName>
    </alternativeName>
</protein>
<organism>
    <name type="scientific">Campylobacter jejuni subsp. jejuni serotype O:2 (strain ATCC 700819 / NCTC 11168)</name>
    <dbReference type="NCBI Taxonomy" id="192222"/>
    <lineage>
        <taxon>Bacteria</taxon>
        <taxon>Pseudomonadati</taxon>
        <taxon>Campylobacterota</taxon>
        <taxon>Epsilonproteobacteria</taxon>
        <taxon>Campylobacterales</taxon>
        <taxon>Campylobacteraceae</taxon>
        <taxon>Campylobacter</taxon>
    </lineage>
</organism>
<keyword id="KW-0997">Cell inner membrane</keyword>
<keyword id="KW-1003">Cell membrane</keyword>
<keyword id="KW-0472">Membrane</keyword>
<keyword id="KW-0520">NAD</keyword>
<keyword id="KW-0874">Quinone</keyword>
<keyword id="KW-1185">Reference proteome</keyword>
<keyword id="KW-1278">Translocase</keyword>
<keyword id="KW-0812">Transmembrane</keyword>
<keyword id="KW-1133">Transmembrane helix</keyword>
<keyword id="KW-0830">Ubiquinone</keyword>
<proteinExistence type="inferred from homology"/>
<sequence>MSDFAFFALETLIKCIIIIAIFASLAGLATYAERKVLAYFQRRIGPDMVGPFGLIQLVADMIKLFTKEDIIPSNSQKFIFAIAPLISAICAFVSLAAIPMLPEFTLFGRVIQPIVADINVALLFVIGTSGLCFYAVFLGGLASNNKWSILGAARGLVSIISYESVGALALIAIIMLVGSFSLVDINNYQSDGFFSWLIFKQPLAFVLFIIALFIETNRTPLCLTENDAEIVAGYGTEYSGLRWGMFFIGEYTSMIAGAILVTLLFLGGFNSFWIIPGWIMMIVKSSFIFFWYFWARAAFPQLRPDQVMKMCYLILIPLAVLNLLITALTVLL</sequence>
<reference key="1">
    <citation type="journal article" date="2000" name="Nature">
        <title>The genome sequence of the food-borne pathogen Campylobacter jejuni reveals hypervariable sequences.</title>
        <authorList>
            <person name="Parkhill J."/>
            <person name="Wren B.W."/>
            <person name="Mungall K.L."/>
            <person name="Ketley J.M."/>
            <person name="Churcher C.M."/>
            <person name="Basham D."/>
            <person name="Chillingworth T."/>
            <person name="Davies R.M."/>
            <person name="Feltwell T."/>
            <person name="Holroyd S."/>
            <person name="Jagels K."/>
            <person name="Karlyshev A.V."/>
            <person name="Moule S."/>
            <person name="Pallen M.J."/>
            <person name="Penn C.W."/>
            <person name="Quail M.A."/>
            <person name="Rajandream M.A."/>
            <person name="Rutherford K.M."/>
            <person name="van Vliet A.H.M."/>
            <person name="Whitehead S."/>
            <person name="Barrell B.G."/>
        </authorList>
    </citation>
    <scope>NUCLEOTIDE SEQUENCE [LARGE SCALE GENOMIC DNA]</scope>
    <source>
        <strain>ATCC 700819 / NCTC 11168</strain>
    </source>
</reference>
<evidence type="ECO:0000255" key="1">
    <source>
        <dbReference type="HAMAP-Rule" id="MF_01350"/>
    </source>
</evidence>
<comment type="function">
    <text evidence="1">NDH-1 shuttles electrons from NADH, via FMN and iron-sulfur (Fe-S) centers, to quinones in the respiratory chain. The immediate electron acceptor for the enzyme in this species is believed to be ubiquinone. Couples the redox reaction to proton translocation (for every two electrons transferred, four hydrogen ions are translocated across the cytoplasmic membrane), and thus conserves the redox energy in a proton gradient. This subunit may bind ubiquinone.</text>
</comment>
<comment type="catalytic activity">
    <reaction evidence="1">
        <text>a quinone + NADH + 5 H(+)(in) = a quinol + NAD(+) + 4 H(+)(out)</text>
        <dbReference type="Rhea" id="RHEA:57888"/>
        <dbReference type="ChEBI" id="CHEBI:15378"/>
        <dbReference type="ChEBI" id="CHEBI:24646"/>
        <dbReference type="ChEBI" id="CHEBI:57540"/>
        <dbReference type="ChEBI" id="CHEBI:57945"/>
        <dbReference type="ChEBI" id="CHEBI:132124"/>
    </reaction>
</comment>
<comment type="subunit">
    <text evidence="1">NDH-1 is composed of 14 different subunits. Subunits NuoA, H, J, K, L, M, N constitute the membrane sector of the complex.</text>
</comment>
<comment type="subcellular location">
    <subcellularLocation>
        <location evidence="1">Cell inner membrane</location>
        <topology evidence="1">Multi-pass membrane protein</topology>
    </subcellularLocation>
</comment>
<comment type="similarity">
    <text evidence="1">Belongs to the complex I subunit 1 family.</text>
</comment>